<dbReference type="EMBL" id="AC022463">
    <property type="status" value="NOT_ANNOTATED_CDS"/>
    <property type="molecule type" value="Genomic_DNA"/>
</dbReference>
<dbReference type="EMBL" id="AB033065">
    <property type="protein sequence ID" value="BAA86553.2"/>
    <property type="molecule type" value="mRNA"/>
</dbReference>
<dbReference type="CCDS" id="CCDS47040.1"/>
<dbReference type="RefSeq" id="NP_001138462.1">
    <property type="nucleotide sequence ID" value="NM_001144990.2"/>
</dbReference>
<dbReference type="BioGRID" id="121562">
    <property type="interactions" value="3"/>
</dbReference>
<dbReference type="FunCoup" id="Q9ULI1">
    <property type="interactions" value="177"/>
</dbReference>
<dbReference type="STRING" id="9606.ENSP00000309501"/>
<dbReference type="GlyGen" id="Q9ULI1">
    <property type="glycosylation" value="1 site"/>
</dbReference>
<dbReference type="iPTMnet" id="Q9ULI1"/>
<dbReference type="PhosphoSitePlus" id="Q9ULI1"/>
<dbReference type="BioMuta" id="NWD2"/>
<dbReference type="DMDM" id="172044833"/>
<dbReference type="jPOST" id="Q9ULI1"/>
<dbReference type="MassIVE" id="Q9ULI1"/>
<dbReference type="PaxDb" id="9606-ENSP00000309501"/>
<dbReference type="PeptideAtlas" id="Q9ULI1"/>
<dbReference type="ProteomicsDB" id="85034"/>
<dbReference type="Antibodypedia" id="71143">
    <property type="antibodies" value="3 antibodies from 3 providers"/>
</dbReference>
<dbReference type="DNASU" id="57495"/>
<dbReference type="Ensembl" id="ENST00000309447.6">
    <property type="protein sequence ID" value="ENSP00000309501.5"/>
    <property type="gene ID" value="ENSG00000174145.8"/>
</dbReference>
<dbReference type="GeneID" id="57495"/>
<dbReference type="KEGG" id="hsa:57495"/>
<dbReference type="MANE-Select" id="ENST00000309447.6">
    <property type="protein sequence ID" value="ENSP00000309501.5"/>
    <property type="RefSeq nucleotide sequence ID" value="NM_001144990.2"/>
    <property type="RefSeq protein sequence ID" value="NP_001138462.1"/>
</dbReference>
<dbReference type="UCSC" id="uc011bxz.3">
    <property type="organism name" value="human"/>
</dbReference>
<dbReference type="AGR" id="HGNC:29229"/>
<dbReference type="CTD" id="57495"/>
<dbReference type="DisGeNET" id="57495"/>
<dbReference type="GeneCards" id="NWD2"/>
<dbReference type="HGNC" id="HGNC:29229">
    <property type="gene designation" value="NWD2"/>
</dbReference>
<dbReference type="HPA" id="ENSG00000174145">
    <property type="expression patterns" value="Tissue enhanced (adipose tissue, brain)"/>
</dbReference>
<dbReference type="MIM" id="620172">
    <property type="type" value="gene"/>
</dbReference>
<dbReference type="neXtProt" id="NX_Q9ULI1"/>
<dbReference type="OpenTargets" id="ENSG00000174145"/>
<dbReference type="PharmGKB" id="PA145148614"/>
<dbReference type="VEuPathDB" id="HostDB:ENSG00000174145"/>
<dbReference type="eggNOG" id="KOG3602">
    <property type="taxonomic scope" value="Eukaryota"/>
</dbReference>
<dbReference type="GeneTree" id="ENSGT00940000153648"/>
<dbReference type="HOGENOM" id="CLU_003267_0_0_1"/>
<dbReference type="InParanoid" id="Q9ULI1"/>
<dbReference type="OMA" id="KHCGIGG"/>
<dbReference type="OrthoDB" id="2325716at2759"/>
<dbReference type="PAN-GO" id="Q9ULI1">
    <property type="GO annotations" value="0 GO annotations based on evolutionary models"/>
</dbReference>
<dbReference type="PhylomeDB" id="Q9ULI1"/>
<dbReference type="TreeFam" id="TF332647"/>
<dbReference type="PathwayCommons" id="Q9ULI1"/>
<dbReference type="BioGRID-ORCS" id="57495">
    <property type="hits" value="9 hits in 1139 CRISPR screens"/>
</dbReference>
<dbReference type="GenomeRNAi" id="57495"/>
<dbReference type="Pharos" id="Q9ULI1">
    <property type="development level" value="Tdark"/>
</dbReference>
<dbReference type="PRO" id="PR:Q9ULI1"/>
<dbReference type="Proteomes" id="UP000005640">
    <property type="component" value="Chromosome 4"/>
</dbReference>
<dbReference type="RNAct" id="Q9ULI1">
    <property type="molecule type" value="protein"/>
</dbReference>
<dbReference type="Bgee" id="ENSG00000174145">
    <property type="expression patterns" value="Expressed in endothelial cell and 67 other cell types or tissues"/>
</dbReference>
<dbReference type="GO" id="GO:0045202">
    <property type="term" value="C:synapse"/>
    <property type="evidence" value="ECO:0007669"/>
    <property type="project" value="Ensembl"/>
</dbReference>
<dbReference type="FunFam" id="2.130.10.10:FF:001157">
    <property type="entry name" value="Leucine-rich repeat and WD repeat-containing protein KIAA1239"/>
    <property type="match status" value="1"/>
</dbReference>
<dbReference type="FunFam" id="2.130.10.10:FF:000299">
    <property type="entry name" value="NACHT and WD repeat domain containing 2"/>
    <property type="match status" value="1"/>
</dbReference>
<dbReference type="FunFam" id="2.130.10.10:FF:000727">
    <property type="entry name" value="NACHT and WD repeat domain containing 2"/>
    <property type="match status" value="1"/>
</dbReference>
<dbReference type="FunFam" id="3.40.50.300:FF:000926">
    <property type="entry name" value="NACHT and WD repeat domain containing 2"/>
    <property type="match status" value="1"/>
</dbReference>
<dbReference type="Gene3D" id="3.40.50.300">
    <property type="entry name" value="P-loop containing nucleotide triphosphate hydrolases"/>
    <property type="match status" value="1"/>
</dbReference>
<dbReference type="Gene3D" id="2.130.10.10">
    <property type="entry name" value="YVTN repeat-like/Quinoprotein amine dehydrogenase"/>
    <property type="match status" value="3"/>
</dbReference>
<dbReference type="InterPro" id="IPR056534">
    <property type="entry name" value="Beta-prop_NWD2_C"/>
</dbReference>
<dbReference type="InterPro" id="IPR052752">
    <property type="entry name" value="NACHT-WD_repeat"/>
</dbReference>
<dbReference type="InterPro" id="IPR027417">
    <property type="entry name" value="P-loop_NTPase"/>
</dbReference>
<dbReference type="InterPro" id="IPR015943">
    <property type="entry name" value="WD40/YVTN_repeat-like_dom_sf"/>
</dbReference>
<dbReference type="InterPro" id="IPR036322">
    <property type="entry name" value="WD40_repeat_dom_sf"/>
</dbReference>
<dbReference type="InterPro" id="IPR001680">
    <property type="entry name" value="WD40_rpt"/>
</dbReference>
<dbReference type="PANTHER" id="PTHR19871">
    <property type="entry name" value="BETA TRANSDUCIN-RELATED PROTEIN"/>
    <property type="match status" value="1"/>
</dbReference>
<dbReference type="PANTHER" id="PTHR19871:SF39">
    <property type="entry name" value="NACHT AND WD REPEAT DOMAIN-CONTAINING PROTEIN 2"/>
    <property type="match status" value="1"/>
</dbReference>
<dbReference type="Pfam" id="PF23586">
    <property type="entry name" value="Beta-prop_NWD2_C"/>
    <property type="match status" value="1"/>
</dbReference>
<dbReference type="Pfam" id="PF25469">
    <property type="entry name" value="HTH_NWD1"/>
    <property type="match status" value="1"/>
</dbReference>
<dbReference type="SMART" id="SM00320">
    <property type="entry name" value="WD40"/>
    <property type="match status" value="5"/>
</dbReference>
<dbReference type="SUPFAM" id="SSF82171">
    <property type="entry name" value="DPP6 N-terminal domain-like"/>
    <property type="match status" value="1"/>
</dbReference>
<dbReference type="SUPFAM" id="SSF52540">
    <property type="entry name" value="P-loop containing nucleoside triphosphate hydrolases"/>
    <property type="match status" value="1"/>
</dbReference>
<dbReference type="SUPFAM" id="SSF50978">
    <property type="entry name" value="WD40 repeat-like"/>
    <property type="match status" value="2"/>
</dbReference>
<dbReference type="PROSITE" id="PS00678">
    <property type="entry name" value="WD_REPEATS_1"/>
    <property type="match status" value="1"/>
</dbReference>
<dbReference type="PROSITE" id="PS50294">
    <property type="entry name" value="WD_REPEATS_REGION"/>
    <property type="match status" value="2"/>
</dbReference>
<keyword id="KW-0433">Leucine-rich repeat</keyword>
<keyword id="KW-1267">Proteomics identification</keyword>
<keyword id="KW-1185">Reference proteome</keyword>
<keyword id="KW-0677">Repeat</keyword>
<keyword id="KW-0853">WD repeat</keyword>
<name>NWD2_HUMAN</name>
<sequence length="1742" mass="197466">MWPAGAGTKLPCPRDSALRRAAFSGNLTALPSHLVPAGRSVRVFISANPEDTGAERQALRENVYPKLREFCRENYGLEFQVIDLYWGVEEDEWDSPELQKTRMKLLENCLKTSAGPCFVGLLGEKYGNIRIPGEVEASEFEMILDAAIEAKLETKLLEEWYCRDENSVPAAYYLRPKSEMLRSNRNAMQPSTNAENEKTWQEISDEIKKIFKAAVKLLHEKGKMKHSQAKRYLFSAIEDEFDFALGKQTPAFLKKCVCYIRKIANIERFVKIPEMGKYMDITGTEPRIIRDPEAQEKLIKLRDEFIPTIVASSNLRVYTSVTHCDMKLGYSQEIENHYIEGLGKQFYEDMIDIIQATIQQNFDTETDTLYDEILQHSSLCKTYASFYEYKCESLNIVHNYILPSKAGHINPLIIYGGPCTGKTLLLAEVAKKAYGWLHEDTGPESDPVVIVRFLGTTDMSSDLRTLLLSVCEQLAVNYRCLVQSYPKKIHDLCDLFINLLNESSLQRPLVIIFDALEQLSENDDARKLWWLPAHLPRFVRIVLSTLPNKHGILQKLRCLIHEEDNYIELIPRDRKMCSQVLKHQLLRVKRKVTSGQQIYVNNALSKCTLPMFVNLTFREVRHWRSHKDVDESSLSVTVHESIEQLFWSLEKKCGQKLVSRALGYITMAKMGLSEMELEDVLALDNSVMSELKENTRPSNPLRVPYLYIARLKEGLSGYLIERHVKNVTLLVWANRHLQLIAQKLYLQDDNDLREMHTILADYFLGVWSGGRRKAFCLEDPYLNGCLDLENRSLLEEEKHFMEQASFDRQAPDQPWVFQCNPLEPDIFFVNHRKMSELLYHLTRCGKTDDLLYGIIMNFSWLYTMIKIGQFDKVLSDIELAYNYSQEKELKFLANTLRSIKNKVTAFPGSLSAELQQRLLPVVSSLPKLRHLLLECDKDGPKYCSIVPLHSSMDVTYSPERLPLSSSHLHVTEILPTCNPSTVLTALENGSISTWDVETRQLLRQITTAQSVILGMKLTSDEKYLVVATTNNTLLIYDNVNSCLLSEVEIKGTKHGSSATYINGFTLSANHALAWLEASKDVTVIDLLYGWPLYQFHCWYEVTCVQCSLDGLYAFCGQYLNTTTIFHLGSGEKLCTVTSEFSGGFVKFLLILDTAQEMVMVDSEGSLSVWNTEDISSPQLTDDFDCRREDSEVVSIELSEDQSAVLICKALSIELLDTGLWKVAEKFRAKHNERFISAVLSKNGDCIIATMENTSAVFFWRRDTGQCMASLQEISGSIVKLVKSSHHNMLLSLSTSGVLSIWDIDIITAMSNIDKTGKPIQSLLLPARGEIIYSLDGSDCVHKWNFSSGFIEAVFKHEGIVEHCVLTSTGDIMVTSDDKSSQYVWHTSSGENLFRINGQRISQLLITHNDQFVVSLCEENASRVWRLATGHRVCNILTTLQNAFITSANTFVVGMTKSKVLAVSLWTGSITKKFCCEDGTTIVNFKLIPDCPDIIVFITSAETVNIWSLTDEVICRRVQLPNNFLKNLEDFEISPNGKLGIIARGDENINVLDLYSGKLRVVHASGIIWRQRLSRDGRYLVYICFRNGEEEDENGAIFSLIVMRLADGKNIGACSLYKTPTFLALSQRHLNIIVGFDDGSIGIYTVVDRVDAALKIKIATSNSRQIFNNATHTSRPKCNSYCFKISVDCLWRESTEVFARDSPITVSDSTESNEATPSKKHNSCYERVCSALEARGHSYAPDN</sequence>
<gene>
    <name type="primary">NWD2</name>
    <name type="synonym">KIAA1239</name>
</gene>
<proteinExistence type="evidence at protein level"/>
<accession>Q9ULI1</accession>
<accession>A8MRU1</accession>
<organism>
    <name type="scientific">Homo sapiens</name>
    <name type="common">Human</name>
    <dbReference type="NCBI Taxonomy" id="9606"/>
    <lineage>
        <taxon>Eukaryota</taxon>
        <taxon>Metazoa</taxon>
        <taxon>Chordata</taxon>
        <taxon>Craniata</taxon>
        <taxon>Vertebrata</taxon>
        <taxon>Euteleostomi</taxon>
        <taxon>Mammalia</taxon>
        <taxon>Eutheria</taxon>
        <taxon>Euarchontoglires</taxon>
        <taxon>Primates</taxon>
        <taxon>Haplorrhini</taxon>
        <taxon>Catarrhini</taxon>
        <taxon>Hominidae</taxon>
        <taxon>Homo</taxon>
    </lineage>
</organism>
<protein>
    <recommendedName>
        <fullName>NACHT and WD repeat domain-containing protein 2</fullName>
    </recommendedName>
    <alternativeName>
        <fullName>Leucine-rich repeat and WD repeat-containing protein KIAA1239</fullName>
    </alternativeName>
</protein>
<feature type="chain" id="PRO_0000320920" description="NACHT and WD repeat domain-containing protein 2">
    <location>
        <begin position="1"/>
        <end position="1742"/>
    </location>
</feature>
<feature type="repeat" description="LRR 1">
    <location>
        <begin position="386"/>
        <end position="410"/>
    </location>
</feature>
<feature type="domain" description="NACHT">
    <location>
        <begin position="410"/>
        <end position="737"/>
    </location>
</feature>
<feature type="repeat" description="LRR 2">
    <location>
        <begin position="677"/>
        <end position="698"/>
    </location>
</feature>
<feature type="repeat" description="LRR 3">
    <location>
        <begin position="724"/>
        <end position="747"/>
    </location>
</feature>
<feature type="repeat" description="LRR 4">
    <location>
        <begin position="883"/>
        <end position="906"/>
    </location>
</feature>
<feature type="repeat" description="LRR 5">
    <location>
        <begin position="925"/>
        <end position="953"/>
    </location>
</feature>
<feature type="repeat" description="WD 1">
    <location>
        <begin position="963"/>
        <end position="1004"/>
    </location>
</feature>
<feature type="repeat" description="WD 2">
    <location>
        <begin position="1007"/>
        <end position="1046"/>
    </location>
</feature>
<feature type="repeat" description="WD 3">
    <location>
        <begin position="1140"/>
        <end position="1179"/>
    </location>
</feature>
<feature type="repeat" description="WD 4">
    <location>
        <begin position="1229"/>
        <end position="1271"/>
    </location>
</feature>
<feature type="repeat" description="WD 5">
    <location>
        <begin position="1272"/>
        <end position="1311"/>
    </location>
</feature>
<feature type="repeat" description="WD 6">
    <location>
        <begin position="1314"/>
        <end position="1353"/>
    </location>
</feature>
<feature type="repeat" description="WD 7">
    <location>
        <begin position="1355"/>
        <end position="1394"/>
    </location>
</feature>
<feature type="repeat" description="WD 8">
    <location>
        <begin position="1396"/>
        <end position="1434"/>
    </location>
</feature>
<feature type="repeat" description="WD 9">
    <location>
        <begin position="1476"/>
        <end position="1516"/>
    </location>
</feature>
<feature type="repeat" description="WD 10">
    <location>
        <begin position="1522"/>
        <end position="1564"/>
    </location>
</feature>
<feature type="repeat" description="WD 11">
    <location>
        <begin position="1614"/>
        <end position="1653"/>
    </location>
</feature>
<feature type="sequence variant" id="VAR_039304" description="In dbSNP:rs4634233.">
    <original>L</original>
    <variation>M</variation>
    <location>
        <position position="569"/>
    </location>
</feature>
<reference key="1">
    <citation type="journal article" date="2005" name="Nature">
        <title>Generation and annotation of the DNA sequences of human chromosomes 2 and 4.</title>
        <authorList>
            <person name="Hillier L.W."/>
            <person name="Graves T.A."/>
            <person name="Fulton R.S."/>
            <person name="Fulton L.A."/>
            <person name="Pepin K.H."/>
            <person name="Minx P."/>
            <person name="Wagner-McPherson C."/>
            <person name="Layman D."/>
            <person name="Wylie K."/>
            <person name="Sekhon M."/>
            <person name="Becker M.C."/>
            <person name="Fewell G.A."/>
            <person name="Delehaunty K.D."/>
            <person name="Miner T.L."/>
            <person name="Nash W.E."/>
            <person name="Kremitzki C."/>
            <person name="Oddy L."/>
            <person name="Du H."/>
            <person name="Sun H."/>
            <person name="Bradshaw-Cordum H."/>
            <person name="Ali J."/>
            <person name="Carter J."/>
            <person name="Cordes M."/>
            <person name="Harris A."/>
            <person name="Isak A."/>
            <person name="van Brunt A."/>
            <person name="Nguyen C."/>
            <person name="Du F."/>
            <person name="Courtney L."/>
            <person name="Kalicki J."/>
            <person name="Ozersky P."/>
            <person name="Abbott S."/>
            <person name="Armstrong J."/>
            <person name="Belter E.A."/>
            <person name="Caruso L."/>
            <person name="Cedroni M."/>
            <person name="Cotton M."/>
            <person name="Davidson T."/>
            <person name="Desai A."/>
            <person name="Elliott G."/>
            <person name="Erb T."/>
            <person name="Fronick C."/>
            <person name="Gaige T."/>
            <person name="Haakenson W."/>
            <person name="Haglund K."/>
            <person name="Holmes A."/>
            <person name="Harkins R."/>
            <person name="Kim K."/>
            <person name="Kruchowski S.S."/>
            <person name="Strong C.M."/>
            <person name="Grewal N."/>
            <person name="Goyea E."/>
            <person name="Hou S."/>
            <person name="Levy A."/>
            <person name="Martinka S."/>
            <person name="Mead K."/>
            <person name="McLellan M.D."/>
            <person name="Meyer R."/>
            <person name="Randall-Maher J."/>
            <person name="Tomlinson C."/>
            <person name="Dauphin-Kohlberg S."/>
            <person name="Kozlowicz-Reilly A."/>
            <person name="Shah N."/>
            <person name="Swearengen-Shahid S."/>
            <person name="Snider J."/>
            <person name="Strong J.T."/>
            <person name="Thompson J."/>
            <person name="Yoakum M."/>
            <person name="Leonard S."/>
            <person name="Pearman C."/>
            <person name="Trani L."/>
            <person name="Radionenko M."/>
            <person name="Waligorski J.E."/>
            <person name="Wang C."/>
            <person name="Rock S.M."/>
            <person name="Tin-Wollam A.-M."/>
            <person name="Maupin R."/>
            <person name="Latreille P."/>
            <person name="Wendl M.C."/>
            <person name="Yang S.-P."/>
            <person name="Pohl C."/>
            <person name="Wallis J.W."/>
            <person name="Spieth J."/>
            <person name="Bieri T.A."/>
            <person name="Berkowicz N."/>
            <person name="Nelson J.O."/>
            <person name="Osborne J."/>
            <person name="Ding L."/>
            <person name="Meyer R."/>
            <person name="Sabo A."/>
            <person name="Shotland Y."/>
            <person name="Sinha P."/>
            <person name="Wohldmann P.E."/>
            <person name="Cook L.L."/>
            <person name="Hickenbotham M.T."/>
            <person name="Eldred J."/>
            <person name="Williams D."/>
            <person name="Jones T.A."/>
            <person name="She X."/>
            <person name="Ciccarelli F.D."/>
            <person name="Izaurralde E."/>
            <person name="Taylor J."/>
            <person name="Schmutz J."/>
            <person name="Myers R.M."/>
            <person name="Cox D.R."/>
            <person name="Huang X."/>
            <person name="McPherson J.D."/>
            <person name="Mardis E.R."/>
            <person name="Clifton S.W."/>
            <person name="Warren W.C."/>
            <person name="Chinwalla A.T."/>
            <person name="Eddy S.R."/>
            <person name="Marra M.A."/>
            <person name="Ovcharenko I."/>
            <person name="Furey T.S."/>
            <person name="Miller W."/>
            <person name="Eichler E.E."/>
            <person name="Bork P."/>
            <person name="Suyama M."/>
            <person name="Torrents D."/>
            <person name="Waterston R.H."/>
            <person name="Wilson R.K."/>
        </authorList>
    </citation>
    <scope>NUCLEOTIDE SEQUENCE [LARGE SCALE GENOMIC DNA]</scope>
</reference>
<reference key="2">
    <citation type="journal article" date="1999" name="DNA Res.">
        <title>Prediction of the coding sequences of unidentified human genes. XV. The complete sequences of 100 new cDNA clones from brain which code for large proteins in vitro.</title>
        <authorList>
            <person name="Nagase T."/>
            <person name="Ishikawa K."/>
            <person name="Kikuno R."/>
            <person name="Hirosawa M."/>
            <person name="Nomura N."/>
            <person name="Ohara O."/>
        </authorList>
    </citation>
    <scope>NUCLEOTIDE SEQUENCE [LARGE SCALE MRNA] OF 579-1742</scope>
    <source>
        <tissue>Brain</tissue>
    </source>
</reference>
<reference key="3">
    <citation type="journal article" date="2002" name="DNA Res.">
        <title>Construction of expression-ready cDNA clones for KIAA genes: manual curation of 330 KIAA cDNA clones.</title>
        <authorList>
            <person name="Nakajima D."/>
            <person name="Okazaki N."/>
            <person name="Yamakawa H."/>
            <person name="Kikuno R."/>
            <person name="Ohara O."/>
            <person name="Nagase T."/>
        </authorList>
    </citation>
    <scope>SEQUENCE REVISION</scope>
</reference>